<organism>
    <name type="scientific">Escherichia coli</name>
    <dbReference type="NCBI Taxonomy" id="562"/>
    <lineage>
        <taxon>Bacteria</taxon>
        <taxon>Pseudomonadati</taxon>
        <taxon>Pseudomonadota</taxon>
        <taxon>Gammaproteobacteria</taxon>
        <taxon>Enterobacterales</taxon>
        <taxon>Enterobacteriaceae</taxon>
        <taxon>Escherichia</taxon>
    </lineage>
</organism>
<proteinExistence type="evidence at protein level"/>
<feature type="signal peptide" evidence="1">
    <location>
        <begin position="1"/>
        <end position="21"/>
    </location>
</feature>
<feature type="chain" id="PRO_0000009194" description="K88 fimbrial protein AB">
    <location>
        <begin position="22"/>
        <end position="285"/>
    </location>
</feature>
<feature type="strand" evidence="3">
    <location>
        <begin position="46"/>
        <end position="50"/>
    </location>
</feature>
<feature type="strand" evidence="3">
    <location>
        <begin position="57"/>
        <end position="60"/>
    </location>
</feature>
<feature type="helix" evidence="3">
    <location>
        <begin position="61"/>
        <end position="63"/>
    </location>
</feature>
<feature type="turn" evidence="3">
    <location>
        <begin position="66"/>
        <end position="69"/>
    </location>
</feature>
<feature type="strand" evidence="3">
    <location>
        <begin position="70"/>
        <end position="74"/>
    </location>
</feature>
<feature type="strand" evidence="3">
    <location>
        <begin position="79"/>
        <end position="88"/>
    </location>
</feature>
<feature type="strand" evidence="3">
    <location>
        <begin position="101"/>
        <end position="107"/>
    </location>
</feature>
<feature type="strand" evidence="3">
    <location>
        <begin position="127"/>
        <end position="135"/>
    </location>
</feature>
<feature type="strand" evidence="3">
    <location>
        <begin position="141"/>
        <end position="158"/>
    </location>
</feature>
<feature type="strand" evidence="3">
    <location>
        <begin position="163"/>
        <end position="170"/>
    </location>
</feature>
<feature type="strand" evidence="3">
    <location>
        <begin position="187"/>
        <end position="191"/>
    </location>
</feature>
<feature type="helix" evidence="3">
    <location>
        <begin position="195"/>
        <end position="205"/>
    </location>
</feature>
<feature type="helix" evidence="3">
    <location>
        <begin position="210"/>
        <end position="220"/>
    </location>
</feature>
<feature type="strand" evidence="3">
    <location>
        <begin position="226"/>
        <end position="229"/>
    </location>
</feature>
<feature type="strand" evidence="3">
    <location>
        <begin position="241"/>
        <end position="243"/>
    </location>
</feature>
<feature type="strand" evidence="3">
    <location>
        <begin position="245"/>
        <end position="254"/>
    </location>
</feature>
<feature type="strand" evidence="3">
    <location>
        <begin position="259"/>
        <end position="266"/>
    </location>
</feature>
<feature type="strand" evidence="3">
    <location>
        <begin position="272"/>
        <end position="275"/>
    </location>
</feature>
<feature type="strand" evidence="3">
    <location>
        <begin position="278"/>
        <end position="284"/>
    </location>
</feature>
<sequence>MKKTLIALAIAASAASGMAHAWMTGDFNGSVDIGGSITADDYRQKWEWKVGTGLNGFGNVLNDLTNGGTKLTITVTGNKPILLGRTKEAFATPVSGGVDGIPQIAFTDYEGASVKLRNTDGETNKGLAYFVLPMKNAEGTKVGSVKVNASYAGVFGKGGVTSADGELFSLFADGLRAIFYGGLTTTVSGAALTSGSAAAARTELFGSLSRNDILGQIQRVNANITSLVDVAGSYREDMEYTDGTVVSAAYALGIANGQTIEATFNQAVTTSTQWSAPLNVAITYY</sequence>
<reference key="1">
    <citation type="journal article" date="1981" name="FEMS Microbiol. Lett.">
        <title>The nucleotide sequence of the gene encoding the K88ab protein subunit of porcine enterotoxigenic Escherichia coli.</title>
        <authorList>
            <person name="Gaastra W."/>
            <person name="Mooi F.R."/>
            <person name="Stuitje A.R."/>
            <person name="de Graaf F.K."/>
        </authorList>
    </citation>
    <scope>NUCLEOTIDE SEQUENCE [GENOMIC DNA]</scope>
</reference>
<reference key="2">
    <citation type="journal article" date="1985" name="Infect. Immun.">
        <title>Nucleotide sequences of four variants of the K88 gene of porcine enterotoxigenic Escherichia coli.</title>
        <authorList>
            <person name="Dykes C.W."/>
            <person name="Halliday I.J."/>
            <person name="Read M.J."/>
            <person name="Hobden A.N."/>
            <person name="Harford S."/>
        </authorList>
    </citation>
    <scope>NUCLEOTIDE SEQUENCE [GENOMIC DNA]</scope>
</reference>
<reference key="3">
    <citation type="journal article" date="1992" name="Mol. Microbiol.">
        <title>Characterization of the antigenic and adhesive properties of FaeG, the major subunit of K88 fimbriae.</title>
        <authorList>
            <person name="Bakker D."/>
            <person name="Willemsen P.T."/>
            <person name="Simons L.H."/>
            <person name="van Zijderveld F.G."/>
            <person name="de Graaf F.K."/>
        </authorList>
    </citation>
    <scope>NUCLEOTIDE SEQUENCE [GENOMIC DNA]</scope>
</reference>
<reference key="4">
    <citation type="journal article" date="1981" name="Eur. J. Biochem.">
        <title>The complete amino-acid sequence of the K88 antigen, a fimbrial protein from Escherichia coli.</title>
        <authorList>
            <person name="Klemm P."/>
        </authorList>
    </citation>
    <scope>PROTEIN SEQUENCE OF 22-185</scope>
    <source>
        <strain>D1721</strain>
    </source>
</reference>
<evidence type="ECO:0000269" key="1">
    <source>
    </source>
</evidence>
<evidence type="ECO:0000305" key="2"/>
<evidence type="ECO:0007829" key="3">
    <source>
        <dbReference type="PDB" id="4WE2"/>
    </source>
</evidence>
<accession>P02970</accession>
<protein>
    <recommendedName>
        <fullName>K88 fimbrial protein AB</fullName>
    </recommendedName>
    <alternativeName>
        <fullName>K88 antigen</fullName>
    </alternativeName>
    <alternativeName>
        <fullName>K88 pilin</fullName>
    </alternativeName>
</protein>
<comment type="function">
    <text>K88 major fimbrial subunit. Fimbriae (also called pili), are polar filaments radiating from the surface of the bacterium to a length of 0.5-1.5 micrometers and numbering 100-300 per cell. They enable bacteria to colonize the epithelium of specific host organs.</text>
</comment>
<comment type="subunit">
    <text>K88 fimbria, 0.1-1 micrometer in length and 7 nanometers in diameter, is composed of about 100 identical subunits.</text>
</comment>
<comment type="subcellular location">
    <subcellularLocation>
        <location>Fimbrium</location>
    </subcellularLocation>
</comment>
<comment type="miscellaneous">
    <text>The protein exists in several antigenic variants.</text>
</comment>
<comment type="similarity">
    <text evidence="2">Belongs to the fimbrial K88 protein family.</text>
</comment>
<dbReference type="EMBL" id="V00292">
    <property type="protein sequence ID" value="CAA23567.1"/>
    <property type="molecule type" value="Genomic_DNA"/>
</dbReference>
<dbReference type="EMBL" id="M29374">
    <property type="protein sequence ID" value="AAA24032.1"/>
    <property type="molecule type" value="Genomic_DNA"/>
</dbReference>
<dbReference type="PIR" id="S07208">
    <property type="entry name" value="YQEC88"/>
</dbReference>
<dbReference type="RefSeq" id="WP_096969423.1">
    <property type="nucleotide sequence ID" value="NZ_NJNJ01000061.1"/>
</dbReference>
<dbReference type="PDB" id="4WE2">
    <property type="method" value="X-ray"/>
    <property type="resolution" value="1.50 A"/>
    <property type="chains" value="A=40-285"/>
</dbReference>
<dbReference type="PDBsum" id="4WE2"/>
<dbReference type="SMR" id="P02970"/>
<dbReference type="UniLectin" id="P02970"/>
<dbReference type="EvolutionaryTrace" id="P02970"/>
<dbReference type="GO" id="GO:0009289">
    <property type="term" value="C:pilus"/>
    <property type="evidence" value="ECO:0007669"/>
    <property type="project" value="UniProtKB-SubCell"/>
</dbReference>
<dbReference type="GO" id="GO:0007155">
    <property type="term" value="P:cell adhesion"/>
    <property type="evidence" value="ECO:0007669"/>
    <property type="project" value="InterPro"/>
</dbReference>
<dbReference type="InterPro" id="IPR003467">
    <property type="entry name" value="Fimbrial_K88_FaeH"/>
</dbReference>
<dbReference type="Pfam" id="PF02432">
    <property type="entry name" value="Fimbrial_K88"/>
    <property type="match status" value="1"/>
</dbReference>
<gene>
    <name type="primary">faeG</name>
</gene>
<keyword id="KW-0002">3D-structure</keyword>
<keyword id="KW-0903">Direct protein sequencing</keyword>
<keyword id="KW-0281">Fimbrium</keyword>
<keyword id="KW-0614">Plasmid</keyword>
<keyword id="KW-0732">Signal</keyword>
<name>FAEG1_ECOLX</name>
<geneLocation type="plasmid">
    <name>pFM205</name>
</geneLocation>